<gene>
    <name type="primary">clpB</name>
    <name type="ordered locus">PA4542</name>
</gene>
<reference key="1">
    <citation type="journal article" date="2004" name="Proc. Natl. Acad. Sci. U.S.A.">
        <title>The broad host range pathogen Pseudomonas aeruginosa strain PA14 carries two pathogenicity islands harboring plant and animal virulence genes.</title>
        <authorList>
            <person name="He J."/>
            <person name="Baldini R.L."/>
            <person name="Deziel E."/>
            <person name="Saucier M."/>
            <person name="Zhang Q."/>
            <person name="Liberati N.T."/>
            <person name="Lee D."/>
            <person name="Urbach J."/>
            <person name="Goodman H.M."/>
            <person name="Rahme L.G."/>
        </authorList>
    </citation>
    <scope>NUCLEOTIDE SEQUENCE [GENOMIC DNA]</scope>
    <source>
        <strain>PA14</strain>
    </source>
</reference>
<reference key="2">
    <citation type="journal article" date="2000" name="Nature">
        <title>Complete genome sequence of Pseudomonas aeruginosa PAO1, an opportunistic pathogen.</title>
        <authorList>
            <person name="Stover C.K."/>
            <person name="Pham X.-Q.T."/>
            <person name="Erwin A.L."/>
            <person name="Mizoguchi S.D."/>
            <person name="Warrener P."/>
            <person name="Hickey M.J."/>
            <person name="Brinkman F.S.L."/>
            <person name="Hufnagle W.O."/>
            <person name="Kowalik D.J."/>
            <person name="Lagrou M."/>
            <person name="Garber R.L."/>
            <person name="Goltry L."/>
            <person name="Tolentino E."/>
            <person name="Westbrock-Wadman S."/>
            <person name="Yuan Y."/>
            <person name="Brody L.L."/>
            <person name="Coulter S.N."/>
            <person name="Folger K.R."/>
            <person name="Kas A."/>
            <person name="Larbig K."/>
            <person name="Lim R.M."/>
            <person name="Smith K.A."/>
            <person name="Spencer D.H."/>
            <person name="Wong G.K.-S."/>
            <person name="Wu Z."/>
            <person name="Paulsen I.T."/>
            <person name="Reizer J."/>
            <person name="Saier M.H. Jr."/>
            <person name="Hancock R.E.W."/>
            <person name="Lory S."/>
            <person name="Olson M.V."/>
        </authorList>
    </citation>
    <scope>NUCLEOTIDE SEQUENCE [LARGE SCALE GENOMIC DNA]</scope>
    <source>
        <strain>ATCC 15692 / DSM 22644 / CIP 104116 / JCM 14847 / LMG 12228 / 1C / PRS 101 / PAO1</strain>
    </source>
</reference>
<proteinExistence type="inferred from homology"/>
<sequence>MRIDRLTSKLQLALSDAQSLAVGHDHPAIEPVHLLSALLEQQGGSIKPLLMQVGFDIAALRSGLNKELDALPKIQSPTGDVNLSQDLARLLNQADRLAQQKGDQFISSELVLLAAMDENTRLGKLLLGQGVSRKALENAVANLRGGEAVNDPNVEESRQALDKYTVDMTKRAEEGKLDPVIGRDDEIRRTIQVLQRRTKNNPVLIGEPGVGKTAIVEGLAQRIINGEVPDGLKDKRLLALDMGALIAGAKFRGEFEERLKAVLNELGKQEGRVILFIDELHTMVGAGKAEGAMDAGNMLKPALARGELHCVGATTLDEYRQYIEKDAALERRFQKVLVDEPSEEDTIAILRGLKERYEVHHGVSITDGAIIAAAKLSHRYITDRQLPDKAIDLIDEAASRIRMEIDSKPEELDRLDRRLIQLKIEREALKKEDDEATRKRLAKLEEDIVKLEREYADLEEIWKSEKAEVQGSAQIQQKIEQAKQEMEAARRKGDLESMARIQYQTIPDLERSLQMVDQHGKTENQLLRNKVTDEEIAEVVSKWTGIPVSKMLEGEREKLLRMEQELHRRVIGQDEAVVAVSNAVRRSRAGLADPNRPSGSFLFLGPTGVGKTELCKALAEFLFDTEEALVRIDMSEFMEKHSVARLIGAPPGYVGFEEGGYLTEAIRRKPYSVVLLDEVEKAHPDVFNILLQVLEDGRLTDSHGRTVDFRNTVVVMTSNLGSAQIQELAGDREAQRAAVMDAVNAHFRPEFINRIDEVVVFEPLAREQIAGIAEIQLGRLRKRLAERELSLELSQEALDKLIAVGFDPVYGARPLKRAIQRWIENPLAQLILAGKFAPGASISAKVEGDEIVFA</sequence>
<feature type="chain" id="PRO_0000191161" description="Chaperone protein ClpB">
    <location>
        <begin position="1"/>
        <end position="854"/>
    </location>
</feature>
<feature type="domain" description="Clp R" evidence="2">
    <location>
        <begin position="3"/>
        <end position="146"/>
    </location>
</feature>
<feature type="region of interest" description="Repeat 1" evidence="2">
    <location>
        <begin position="6"/>
        <end position="71"/>
    </location>
</feature>
<feature type="region of interest" description="Repeat 2" evidence="2">
    <location>
        <begin position="83"/>
        <end position="146"/>
    </location>
</feature>
<feature type="region of interest" description="NBD1" evidence="1">
    <location>
        <begin position="159"/>
        <end position="340"/>
    </location>
</feature>
<feature type="region of interest" description="Linker" evidence="1">
    <location>
        <begin position="341"/>
        <end position="545"/>
    </location>
</feature>
<feature type="region of interest" description="NBD2" evidence="1">
    <location>
        <begin position="555"/>
        <end position="763"/>
    </location>
</feature>
<feature type="region of interest" description="C-terminal" evidence="1">
    <location>
        <begin position="764"/>
        <end position="854"/>
    </location>
</feature>
<feature type="coiled-coil region" evidence="1">
    <location>
        <begin position="391"/>
        <end position="524"/>
    </location>
</feature>
<feature type="binding site" evidence="1">
    <location>
        <begin position="206"/>
        <end position="213"/>
    </location>
    <ligand>
        <name>ATP</name>
        <dbReference type="ChEBI" id="CHEBI:30616"/>
        <label>1</label>
    </ligand>
</feature>
<feature type="binding site" evidence="1">
    <location>
        <begin position="605"/>
        <end position="612"/>
    </location>
    <ligand>
        <name>ATP</name>
        <dbReference type="ChEBI" id="CHEBI:30616"/>
        <label>2</label>
    </ligand>
</feature>
<dbReference type="EMBL" id="AY273871">
    <property type="protein sequence ID" value="AAP81264.1"/>
    <property type="molecule type" value="Genomic_DNA"/>
</dbReference>
<dbReference type="EMBL" id="AE004091">
    <property type="protein sequence ID" value="AAG07930.1"/>
    <property type="molecule type" value="Genomic_DNA"/>
</dbReference>
<dbReference type="PIR" id="D83077">
    <property type="entry name" value="D83077"/>
</dbReference>
<dbReference type="RefSeq" id="NP_253232.1">
    <property type="nucleotide sequence ID" value="NC_002516.2"/>
</dbReference>
<dbReference type="RefSeq" id="WP_003094682.1">
    <property type="nucleotide sequence ID" value="NZ_QZGE01000004.1"/>
</dbReference>
<dbReference type="SMR" id="Q9HVN5"/>
<dbReference type="FunCoup" id="Q9HVN5">
    <property type="interactions" value="710"/>
</dbReference>
<dbReference type="STRING" id="208964.PA4542"/>
<dbReference type="PaxDb" id="208964-PA4542"/>
<dbReference type="GeneID" id="879457"/>
<dbReference type="KEGG" id="pae:PA4542"/>
<dbReference type="PATRIC" id="fig|208964.12.peg.4753"/>
<dbReference type="PseudoCAP" id="PA4542"/>
<dbReference type="HOGENOM" id="CLU_005070_4_0_6"/>
<dbReference type="InParanoid" id="Q9HVN5"/>
<dbReference type="OrthoDB" id="9803641at2"/>
<dbReference type="PhylomeDB" id="Q9HVN5"/>
<dbReference type="BioCyc" id="PAER208964:G1FZ6-4635-MONOMER"/>
<dbReference type="Proteomes" id="UP000002438">
    <property type="component" value="Chromosome"/>
</dbReference>
<dbReference type="GO" id="GO:0005737">
    <property type="term" value="C:cytoplasm"/>
    <property type="evidence" value="ECO:0000318"/>
    <property type="project" value="GO_Central"/>
</dbReference>
<dbReference type="GO" id="GO:0005524">
    <property type="term" value="F:ATP binding"/>
    <property type="evidence" value="ECO:0007669"/>
    <property type="project" value="UniProtKB-KW"/>
</dbReference>
<dbReference type="GO" id="GO:0016887">
    <property type="term" value="F:ATP hydrolysis activity"/>
    <property type="evidence" value="ECO:0000318"/>
    <property type="project" value="GO_Central"/>
</dbReference>
<dbReference type="GO" id="GO:0034605">
    <property type="term" value="P:cellular response to heat"/>
    <property type="evidence" value="ECO:0000318"/>
    <property type="project" value="GO_Central"/>
</dbReference>
<dbReference type="GO" id="GO:0042026">
    <property type="term" value="P:protein refolding"/>
    <property type="evidence" value="ECO:0007669"/>
    <property type="project" value="InterPro"/>
</dbReference>
<dbReference type="CDD" id="cd00009">
    <property type="entry name" value="AAA"/>
    <property type="match status" value="1"/>
</dbReference>
<dbReference type="CDD" id="cd19499">
    <property type="entry name" value="RecA-like_ClpB_Hsp104-like"/>
    <property type="match status" value="1"/>
</dbReference>
<dbReference type="FunFam" id="1.10.1780.10:FF:000003">
    <property type="entry name" value="ATP-dependent chaperone ClpB"/>
    <property type="match status" value="1"/>
</dbReference>
<dbReference type="FunFam" id="1.10.8.60:FF:000017">
    <property type="entry name" value="ATP-dependent chaperone ClpB"/>
    <property type="match status" value="1"/>
</dbReference>
<dbReference type="FunFam" id="3.40.50.300:FF:000120">
    <property type="entry name" value="ATP-dependent chaperone ClpB"/>
    <property type="match status" value="1"/>
</dbReference>
<dbReference type="FunFam" id="3.40.50.300:FF:000025">
    <property type="entry name" value="ATP-dependent Clp protease subunit"/>
    <property type="match status" value="1"/>
</dbReference>
<dbReference type="FunFam" id="3.40.50.300:FF:000010">
    <property type="entry name" value="Chaperone clpB 1, putative"/>
    <property type="match status" value="1"/>
</dbReference>
<dbReference type="Gene3D" id="1.10.8.60">
    <property type="match status" value="1"/>
</dbReference>
<dbReference type="Gene3D" id="1.10.1780.10">
    <property type="entry name" value="Clp, N-terminal domain"/>
    <property type="match status" value="1"/>
</dbReference>
<dbReference type="Gene3D" id="3.40.50.300">
    <property type="entry name" value="P-loop containing nucleotide triphosphate hydrolases"/>
    <property type="match status" value="3"/>
</dbReference>
<dbReference type="InterPro" id="IPR003593">
    <property type="entry name" value="AAA+_ATPase"/>
</dbReference>
<dbReference type="InterPro" id="IPR003959">
    <property type="entry name" value="ATPase_AAA_core"/>
</dbReference>
<dbReference type="InterPro" id="IPR017730">
    <property type="entry name" value="Chaperonin_ClpB"/>
</dbReference>
<dbReference type="InterPro" id="IPR019489">
    <property type="entry name" value="Clp_ATPase_C"/>
</dbReference>
<dbReference type="InterPro" id="IPR036628">
    <property type="entry name" value="Clp_N_dom_sf"/>
</dbReference>
<dbReference type="InterPro" id="IPR004176">
    <property type="entry name" value="Clp_R_dom"/>
</dbReference>
<dbReference type="InterPro" id="IPR001270">
    <property type="entry name" value="ClpA/B"/>
</dbReference>
<dbReference type="InterPro" id="IPR018368">
    <property type="entry name" value="ClpA/B_CS1"/>
</dbReference>
<dbReference type="InterPro" id="IPR028299">
    <property type="entry name" value="ClpA/B_CS2"/>
</dbReference>
<dbReference type="InterPro" id="IPR041546">
    <property type="entry name" value="ClpA/ClpB_AAA_lid"/>
</dbReference>
<dbReference type="InterPro" id="IPR050130">
    <property type="entry name" value="ClpA_ClpB"/>
</dbReference>
<dbReference type="InterPro" id="IPR027417">
    <property type="entry name" value="P-loop_NTPase"/>
</dbReference>
<dbReference type="NCBIfam" id="TIGR03346">
    <property type="entry name" value="chaperone_ClpB"/>
    <property type="match status" value="1"/>
</dbReference>
<dbReference type="NCBIfam" id="NF008118">
    <property type="entry name" value="PRK10865.1"/>
    <property type="match status" value="1"/>
</dbReference>
<dbReference type="PANTHER" id="PTHR11638">
    <property type="entry name" value="ATP-DEPENDENT CLP PROTEASE"/>
    <property type="match status" value="1"/>
</dbReference>
<dbReference type="PANTHER" id="PTHR11638:SF18">
    <property type="entry name" value="HEAT SHOCK PROTEIN 104"/>
    <property type="match status" value="1"/>
</dbReference>
<dbReference type="Pfam" id="PF00004">
    <property type="entry name" value="AAA"/>
    <property type="match status" value="1"/>
</dbReference>
<dbReference type="Pfam" id="PF07724">
    <property type="entry name" value="AAA_2"/>
    <property type="match status" value="1"/>
</dbReference>
<dbReference type="Pfam" id="PF17871">
    <property type="entry name" value="AAA_lid_9"/>
    <property type="match status" value="1"/>
</dbReference>
<dbReference type="Pfam" id="PF02861">
    <property type="entry name" value="Clp_N"/>
    <property type="match status" value="2"/>
</dbReference>
<dbReference type="Pfam" id="PF10431">
    <property type="entry name" value="ClpB_D2-small"/>
    <property type="match status" value="1"/>
</dbReference>
<dbReference type="PRINTS" id="PR00300">
    <property type="entry name" value="CLPPROTEASEA"/>
</dbReference>
<dbReference type="SMART" id="SM00382">
    <property type="entry name" value="AAA"/>
    <property type="match status" value="2"/>
</dbReference>
<dbReference type="SMART" id="SM01086">
    <property type="entry name" value="ClpB_D2-small"/>
    <property type="match status" value="1"/>
</dbReference>
<dbReference type="SUPFAM" id="SSF81923">
    <property type="entry name" value="Double Clp-N motif"/>
    <property type="match status" value="1"/>
</dbReference>
<dbReference type="SUPFAM" id="SSF52540">
    <property type="entry name" value="P-loop containing nucleoside triphosphate hydrolases"/>
    <property type="match status" value="2"/>
</dbReference>
<dbReference type="PROSITE" id="PS51903">
    <property type="entry name" value="CLP_R"/>
    <property type="match status" value="1"/>
</dbReference>
<dbReference type="PROSITE" id="PS00870">
    <property type="entry name" value="CLPAB_1"/>
    <property type="match status" value="1"/>
</dbReference>
<dbReference type="PROSITE" id="PS00871">
    <property type="entry name" value="CLPAB_2"/>
    <property type="match status" value="1"/>
</dbReference>
<evidence type="ECO:0000250" key="1"/>
<evidence type="ECO:0000255" key="2">
    <source>
        <dbReference type="PROSITE-ProRule" id="PRU01251"/>
    </source>
</evidence>
<evidence type="ECO:0000305" key="3"/>
<accession>Q9HVN5</accession>
<accession>Q79JA9</accession>
<name>CLPB_PSEAE</name>
<keyword id="KW-0067">ATP-binding</keyword>
<keyword id="KW-0143">Chaperone</keyword>
<keyword id="KW-0175">Coiled coil</keyword>
<keyword id="KW-0963">Cytoplasm</keyword>
<keyword id="KW-0547">Nucleotide-binding</keyword>
<keyword id="KW-1185">Reference proteome</keyword>
<keyword id="KW-0677">Repeat</keyword>
<keyword id="KW-0346">Stress response</keyword>
<comment type="function">
    <text evidence="1">Part of a stress-induced multi-chaperone system, it is involved in the recovery of the cell from heat-induced damage, in cooperation with DnaK, DnaJ and GrpE. Acts before DnaK, in the processing of protein aggregates. Protein binding stimulates the ATPase activity; ATP hydrolysis unfolds the denatured protein aggregates, which probably helps expose new hydrophobic binding sites on the surface of ClpB-bound aggregates, contributing to the solubilization and refolding of denatured protein aggregates by DnaK (By similarity).</text>
</comment>
<comment type="subunit">
    <text evidence="1">Homohexamer. The oligomerization is ATP-dependent (By similarity).</text>
</comment>
<comment type="subcellular location">
    <subcellularLocation>
        <location evidence="3">Cytoplasm</location>
    </subcellularLocation>
</comment>
<comment type="domain">
    <text evidence="1">The Clp repeat (R) domain probably functions as a substrate-discriminating domain, recruiting aggregated proteins to the ClpB hexamer and/or stabilizing bound proteins. The NBD2 domain is responsible for oligomerization, whereas the NBD1 domain stabilizes the hexamer probably in an ATP-dependent manner. The movement of the coiled-coil domain is essential for ClpB ability to rescue proteins from an aggregated state, probably by pulling apart large aggregated proteins, which are bound between the coiled-coils motifs of adjacent ClpB subunits in the functional hexamer (By similarity).</text>
</comment>
<comment type="similarity">
    <text evidence="3">Belongs to the ClpA/ClpB family.</text>
</comment>
<protein>
    <recommendedName>
        <fullName>Chaperone protein ClpB</fullName>
    </recommendedName>
</protein>
<organism>
    <name type="scientific">Pseudomonas aeruginosa (strain ATCC 15692 / DSM 22644 / CIP 104116 / JCM 14847 / LMG 12228 / 1C / PRS 101 / PAO1)</name>
    <dbReference type="NCBI Taxonomy" id="208964"/>
    <lineage>
        <taxon>Bacteria</taxon>
        <taxon>Pseudomonadati</taxon>
        <taxon>Pseudomonadota</taxon>
        <taxon>Gammaproteobacteria</taxon>
        <taxon>Pseudomonadales</taxon>
        <taxon>Pseudomonadaceae</taxon>
        <taxon>Pseudomonas</taxon>
    </lineage>
</organism>